<dbReference type="EC" id="2.7.4.3" evidence="1"/>
<dbReference type="EMBL" id="CP000499">
    <property type="protein sequence ID" value="ABN66715.1"/>
    <property type="molecule type" value="Genomic_DNA"/>
</dbReference>
<dbReference type="RefSeq" id="XP_001384744.1">
    <property type="nucleotide sequence ID" value="XM_001384707.1"/>
</dbReference>
<dbReference type="SMR" id="A3LV51"/>
<dbReference type="FunCoup" id="A3LV51">
    <property type="interactions" value="866"/>
</dbReference>
<dbReference type="STRING" id="322104.A3LV51"/>
<dbReference type="GeneID" id="4839339"/>
<dbReference type="KEGG" id="pic:PICST_65737"/>
<dbReference type="eggNOG" id="KOG3078">
    <property type="taxonomic scope" value="Eukaryota"/>
</dbReference>
<dbReference type="HOGENOM" id="CLU_032354_1_0_1"/>
<dbReference type="InParanoid" id="A3LV51"/>
<dbReference type="OMA" id="VYHEQTA"/>
<dbReference type="OrthoDB" id="439792at2759"/>
<dbReference type="Proteomes" id="UP000002258">
    <property type="component" value="Chromosome 5"/>
</dbReference>
<dbReference type="GO" id="GO:0005829">
    <property type="term" value="C:cytosol"/>
    <property type="evidence" value="ECO:0007669"/>
    <property type="project" value="UniProtKB-SubCell"/>
</dbReference>
<dbReference type="GO" id="GO:0005758">
    <property type="term" value="C:mitochondrial intermembrane space"/>
    <property type="evidence" value="ECO:0007669"/>
    <property type="project" value="UniProtKB-SubCell"/>
</dbReference>
<dbReference type="GO" id="GO:0004017">
    <property type="term" value="F:adenylate kinase activity"/>
    <property type="evidence" value="ECO:0007669"/>
    <property type="project" value="UniProtKB-UniRule"/>
</dbReference>
<dbReference type="GO" id="GO:0016208">
    <property type="term" value="F:AMP binding"/>
    <property type="evidence" value="ECO:0007669"/>
    <property type="project" value="EnsemblFungi"/>
</dbReference>
<dbReference type="GO" id="GO:0005524">
    <property type="term" value="F:ATP binding"/>
    <property type="evidence" value="ECO:0007669"/>
    <property type="project" value="UniProtKB-KW"/>
</dbReference>
<dbReference type="GO" id="GO:0003688">
    <property type="term" value="F:DNA replication origin binding"/>
    <property type="evidence" value="ECO:0007669"/>
    <property type="project" value="EnsemblFungi"/>
</dbReference>
<dbReference type="GO" id="GO:0006172">
    <property type="term" value="P:ADP biosynthetic process"/>
    <property type="evidence" value="ECO:0007669"/>
    <property type="project" value="UniProtKB-UniRule"/>
</dbReference>
<dbReference type="GO" id="GO:0046033">
    <property type="term" value="P:AMP metabolic process"/>
    <property type="evidence" value="ECO:0007669"/>
    <property type="project" value="UniProtKB-UniRule"/>
</dbReference>
<dbReference type="GO" id="GO:0046034">
    <property type="term" value="P:ATP metabolic process"/>
    <property type="evidence" value="ECO:0007669"/>
    <property type="project" value="UniProtKB-UniRule"/>
</dbReference>
<dbReference type="GO" id="GO:0006270">
    <property type="term" value="P:DNA replication initiation"/>
    <property type="evidence" value="ECO:0007669"/>
    <property type="project" value="EnsemblFungi"/>
</dbReference>
<dbReference type="GO" id="GO:0036388">
    <property type="term" value="P:pre-replicative complex assembly"/>
    <property type="evidence" value="ECO:0007669"/>
    <property type="project" value="EnsemblFungi"/>
</dbReference>
<dbReference type="CDD" id="cd01428">
    <property type="entry name" value="ADK"/>
    <property type="match status" value="1"/>
</dbReference>
<dbReference type="FunFam" id="3.40.50.300:FF:000106">
    <property type="entry name" value="Adenylate kinase mitochondrial"/>
    <property type="match status" value="1"/>
</dbReference>
<dbReference type="Gene3D" id="3.40.50.300">
    <property type="entry name" value="P-loop containing nucleotide triphosphate hydrolases"/>
    <property type="match status" value="1"/>
</dbReference>
<dbReference type="HAMAP" id="MF_00235">
    <property type="entry name" value="Adenylate_kinase_Adk"/>
    <property type="match status" value="1"/>
</dbReference>
<dbReference type="HAMAP" id="MF_03168">
    <property type="entry name" value="Adenylate_kinase_AK2"/>
    <property type="match status" value="1"/>
</dbReference>
<dbReference type="InterPro" id="IPR006259">
    <property type="entry name" value="Adenyl_kin_sub"/>
</dbReference>
<dbReference type="InterPro" id="IPR000850">
    <property type="entry name" value="Adenylat/UMP-CMP_kin"/>
</dbReference>
<dbReference type="InterPro" id="IPR033690">
    <property type="entry name" value="Adenylat_kinase_CS"/>
</dbReference>
<dbReference type="InterPro" id="IPR007862">
    <property type="entry name" value="Adenylate_kinase_lid-dom"/>
</dbReference>
<dbReference type="InterPro" id="IPR028587">
    <property type="entry name" value="AK2"/>
</dbReference>
<dbReference type="InterPro" id="IPR027417">
    <property type="entry name" value="P-loop_NTPase"/>
</dbReference>
<dbReference type="NCBIfam" id="TIGR01351">
    <property type="entry name" value="adk"/>
    <property type="match status" value="1"/>
</dbReference>
<dbReference type="NCBIfam" id="NF001380">
    <property type="entry name" value="PRK00279.1-2"/>
    <property type="match status" value="1"/>
</dbReference>
<dbReference type="NCBIfam" id="NF001381">
    <property type="entry name" value="PRK00279.1-3"/>
    <property type="match status" value="1"/>
</dbReference>
<dbReference type="NCBIfam" id="NF011100">
    <property type="entry name" value="PRK14527.1"/>
    <property type="match status" value="1"/>
</dbReference>
<dbReference type="PANTHER" id="PTHR23359">
    <property type="entry name" value="NUCLEOTIDE KINASE"/>
    <property type="match status" value="1"/>
</dbReference>
<dbReference type="Pfam" id="PF00406">
    <property type="entry name" value="ADK"/>
    <property type="match status" value="1"/>
</dbReference>
<dbReference type="Pfam" id="PF05191">
    <property type="entry name" value="ADK_lid"/>
    <property type="match status" value="1"/>
</dbReference>
<dbReference type="PRINTS" id="PR00094">
    <property type="entry name" value="ADENYLTKNASE"/>
</dbReference>
<dbReference type="SUPFAM" id="SSF52540">
    <property type="entry name" value="P-loop containing nucleoside triphosphate hydrolases"/>
    <property type="match status" value="1"/>
</dbReference>
<dbReference type="PROSITE" id="PS00113">
    <property type="entry name" value="ADENYLATE_KINASE"/>
    <property type="match status" value="1"/>
</dbReference>
<sequence>MTVEDLKATVAKLQERIQYLEKKAGLVPDVPKSVRMVLIGPPGAGKGTQAPNLKEKFCACHLATGDMLRAQVAAKTALGVEAKKIMDQGGLVSDEIMVNMIKSELENNKECANGFILDGFPRTIPQAEKLDSMLVDRKTPLENAIELKIDDELLVARITGRLVHPASGRSYHKLFNPPKKNMIDDITGEPLVQRSDDNEAALKKRLVTYHKQTEPIVDYYRKTGIWSGIDASQKPATVWTDILKCLGQK</sequence>
<organism>
    <name type="scientific">Scheffersomyces stipitis (strain ATCC 58785 / CBS 6054 / NBRC 10063 / NRRL Y-11545)</name>
    <name type="common">Yeast</name>
    <name type="synonym">Pichia stipitis</name>
    <dbReference type="NCBI Taxonomy" id="322104"/>
    <lineage>
        <taxon>Eukaryota</taxon>
        <taxon>Fungi</taxon>
        <taxon>Dikarya</taxon>
        <taxon>Ascomycota</taxon>
        <taxon>Saccharomycotina</taxon>
        <taxon>Pichiomycetes</taxon>
        <taxon>Debaryomycetaceae</taxon>
        <taxon>Scheffersomyces</taxon>
    </lineage>
</organism>
<name>KAD2_PICST</name>
<gene>
    <name evidence="1" type="primary">ADK1</name>
    <name type="ORF">PICST_65737</name>
</gene>
<reference key="1">
    <citation type="journal article" date="2007" name="Nat. Biotechnol.">
        <title>Genome sequence of the lignocellulose-bioconverting and xylose-fermenting yeast Pichia stipitis.</title>
        <authorList>
            <person name="Jeffries T.W."/>
            <person name="Grigoriev I.V."/>
            <person name="Grimwood J."/>
            <person name="Laplaza J.M."/>
            <person name="Aerts A."/>
            <person name="Salamov A."/>
            <person name="Schmutz J."/>
            <person name="Lindquist E."/>
            <person name="Dehal P."/>
            <person name="Shapiro H."/>
            <person name="Jin Y.-S."/>
            <person name="Passoth V."/>
            <person name="Richardson P.M."/>
        </authorList>
    </citation>
    <scope>NUCLEOTIDE SEQUENCE [LARGE SCALE GENOMIC DNA]</scope>
    <source>
        <strain>ATCC 58785 / CBS 6054 / NBRC 10063 / NRRL Y-11545</strain>
    </source>
</reference>
<accession>A3LV51</accession>
<comment type="function">
    <text evidence="1">Catalyzes the reversible transfer of the terminal phosphate group between ATP and AMP. Plays an important role in cellular energy homeostasis and in adenine nucleotide metabolism. Adenylate kinase activity is critical for regulation of the phosphate utilization and the AMP de novo biosynthesis pathways.</text>
</comment>
<comment type="catalytic activity">
    <reaction evidence="1">
        <text>AMP + ATP = 2 ADP</text>
        <dbReference type="Rhea" id="RHEA:12973"/>
        <dbReference type="ChEBI" id="CHEBI:30616"/>
        <dbReference type="ChEBI" id="CHEBI:456215"/>
        <dbReference type="ChEBI" id="CHEBI:456216"/>
        <dbReference type="EC" id="2.7.4.3"/>
    </reaction>
</comment>
<comment type="subunit">
    <text evidence="1">Monomer.</text>
</comment>
<comment type="subcellular location">
    <subcellularLocation>
        <location evidence="1">Cytoplasm</location>
        <location evidence="1">Cytosol</location>
    </subcellularLocation>
    <subcellularLocation>
        <location evidence="1">Mitochondrion intermembrane space</location>
    </subcellularLocation>
    <text evidence="1">Predominantly mitochondrial.</text>
</comment>
<comment type="domain">
    <text evidence="1">Consists of three domains, a large central CORE domain and two small peripheral domains, NMPbind and LID, which undergo movements during catalysis. The LID domain closes over the site of phosphoryl transfer upon ATP binding. Assembling and dissambling the active center during each catalytic cycle provides an effective means to prevent ATP hydrolysis.</text>
</comment>
<comment type="similarity">
    <text evidence="1">Belongs to the adenylate kinase family. AK2 subfamily.</text>
</comment>
<proteinExistence type="inferred from homology"/>
<feature type="chain" id="PRO_0000365684" description="Adenylate kinase">
    <location>
        <begin position="1"/>
        <end position="249"/>
    </location>
</feature>
<feature type="region of interest" description="NMP" evidence="1">
    <location>
        <begin position="63"/>
        <end position="92"/>
    </location>
</feature>
<feature type="region of interest" description="LID" evidence="1">
    <location>
        <begin position="160"/>
        <end position="197"/>
    </location>
</feature>
<feature type="binding site" evidence="1">
    <location>
        <begin position="43"/>
        <end position="48"/>
    </location>
    <ligand>
        <name>ATP</name>
        <dbReference type="ChEBI" id="CHEBI:30616"/>
    </ligand>
</feature>
<feature type="binding site" evidence="1">
    <location>
        <position position="64"/>
    </location>
    <ligand>
        <name>AMP</name>
        <dbReference type="ChEBI" id="CHEBI:456215"/>
    </ligand>
</feature>
<feature type="binding site" evidence="1">
    <location>
        <position position="69"/>
    </location>
    <ligand>
        <name>AMP</name>
        <dbReference type="ChEBI" id="CHEBI:456215"/>
    </ligand>
</feature>
<feature type="binding site" evidence="1">
    <location>
        <begin position="90"/>
        <end position="92"/>
    </location>
    <ligand>
        <name>AMP</name>
        <dbReference type="ChEBI" id="CHEBI:456215"/>
    </ligand>
</feature>
<feature type="binding site" evidence="1">
    <location>
        <begin position="119"/>
        <end position="122"/>
    </location>
    <ligand>
        <name>AMP</name>
        <dbReference type="ChEBI" id="CHEBI:456215"/>
    </ligand>
</feature>
<feature type="binding site" evidence="1">
    <location>
        <position position="126"/>
    </location>
    <ligand>
        <name>AMP</name>
        <dbReference type="ChEBI" id="CHEBI:456215"/>
    </ligand>
</feature>
<feature type="binding site" evidence="1">
    <location>
        <position position="161"/>
    </location>
    <ligand>
        <name>ATP</name>
        <dbReference type="ChEBI" id="CHEBI:30616"/>
    </ligand>
</feature>
<feature type="binding site" evidence="1">
    <location>
        <begin position="170"/>
        <end position="171"/>
    </location>
    <ligand>
        <name>ATP</name>
        <dbReference type="ChEBI" id="CHEBI:30616"/>
    </ligand>
</feature>
<feature type="binding site" evidence="1">
    <location>
        <position position="194"/>
    </location>
    <ligand>
        <name>AMP</name>
        <dbReference type="ChEBI" id="CHEBI:456215"/>
    </ligand>
</feature>
<feature type="binding site" evidence="1">
    <location>
        <position position="205"/>
    </location>
    <ligand>
        <name>AMP</name>
        <dbReference type="ChEBI" id="CHEBI:456215"/>
    </ligand>
</feature>
<feature type="binding site" evidence="1">
    <location>
        <position position="233"/>
    </location>
    <ligand>
        <name>ATP</name>
        <dbReference type="ChEBI" id="CHEBI:30616"/>
    </ligand>
</feature>
<keyword id="KW-0067">ATP-binding</keyword>
<keyword id="KW-0963">Cytoplasm</keyword>
<keyword id="KW-0418">Kinase</keyword>
<keyword id="KW-0496">Mitochondrion</keyword>
<keyword id="KW-0547">Nucleotide-binding</keyword>
<keyword id="KW-1185">Reference proteome</keyword>
<keyword id="KW-0808">Transferase</keyword>
<evidence type="ECO:0000255" key="1">
    <source>
        <dbReference type="HAMAP-Rule" id="MF_03168"/>
    </source>
</evidence>
<protein>
    <recommendedName>
        <fullName evidence="1">Adenylate kinase</fullName>
        <ecNumber evidence="1">2.7.4.3</ecNumber>
    </recommendedName>
    <alternativeName>
        <fullName evidence="1">ATP-AMP transphosphorylase</fullName>
    </alternativeName>
    <alternativeName>
        <fullName evidence="1">ATP:AMP phosphotransferase</fullName>
    </alternativeName>
    <alternativeName>
        <fullName evidence="1">Adenylate kinase cytosolic and mitochondrial</fullName>
    </alternativeName>
    <alternativeName>
        <fullName evidence="1">Adenylate monophosphate kinase</fullName>
    </alternativeName>
</protein>